<organism>
    <name type="scientific">Salmonella dublin (strain CT_02021853)</name>
    <dbReference type="NCBI Taxonomy" id="439851"/>
    <lineage>
        <taxon>Bacteria</taxon>
        <taxon>Pseudomonadati</taxon>
        <taxon>Pseudomonadota</taxon>
        <taxon>Gammaproteobacteria</taxon>
        <taxon>Enterobacterales</taxon>
        <taxon>Enterobacteriaceae</taxon>
        <taxon>Salmonella</taxon>
    </lineage>
</organism>
<dbReference type="EC" id="7.1.1.-" evidence="1"/>
<dbReference type="EMBL" id="CP001144">
    <property type="protein sequence ID" value="ACH75366.1"/>
    <property type="molecule type" value="Genomic_DNA"/>
</dbReference>
<dbReference type="RefSeq" id="WP_000156675.1">
    <property type="nucleotide sequence ID" value="NC_011205.1"/>
</dbReference>
<dbReference type="SMR" id="B5FPF7"/>
<dbReference type="KEGG" id="sed:SeD_A2662"/>
<dbReference type="HOGENOM" id="CLU_007100_1_5_6"/>
<dbReference type="Proteomes" id="UP000008322">
    <property type="component" value="Chromosome"/>
</dbReference>
<dbReference type="GO" id="GO:0005886">
    <property type="term" value="C:plasma membrane"/>
    <property type="evidence" value="ECO:0007669"/>
    <property type="project" value="UniProtKB-SubCell"/>
</dbReference>
<dbReference type="GO" id="GO:0008137">
    <property type="term" value="F:NADH dehydrogenase (ubiquinone) activity"/>
    <property type="evidence" value="ECO:0007669"/>
    <property type="project" value="InterPro"/>
</dbReference>
<dbReference type="GO" id="GO:0050136">
    <property type="term" value="F:NADH:ubiquinone reductase (non-electrogenic) activity"/>
    <property type="evidence" value="ECO:0007669"/>
    <property type="project" value="UniProtKB-UniRule"/>
</dbReference>
<dbReference type="GO" id="GO:0048038">
    <property type="term" value="F:quinone binding"/>
    <property type="evidence" value="ECO:0007669"/>
    <property type="project" value="UniProtKB-KW"/>
</dbReference>
<dbReference type="GO" id="GO:0042773">
    <property type="term" value="P:ATP synthesis coupled electron transport"/>
    <property type="evidence" value="ECO:0007669"/>
    <property type="project" value="InterPro"/>
</dbReference>
<dbReference type="HAMAP" id="MF_00445">
    <property type="entry name" value="NDH1_NuoN_1"/>
    <property type="match status" value="1"/>
</dbReference>
<dbReference type="InterPro" id="IPR010096">
    <property type="entry name" value="NADH-Q_OxRdtase_suN/2"/>
</dbReference>
<dbReference type="InterPro" id="IPR001750">
    <property type="entry name" value="ND/Mrp_TM"/>
</dbReference>
<dbReference type="NCBIfam" id="TIGR01770">
    <property type="entry name" value="NDH_I_N"/>
    <property type="match status" value="1"/>
</dbReference>
<dbReference type="NCBIfam" id="NF004439">
    <property type="entry name" value="PRK05777.1-1"/>
    <property type="match status" value="1"/>
</dbReference>
<dbReference type="PANTHER" id="PTHR22773">
    <property type="entry name" value="NADH DEHYDROGENASE"/>
    <property type="match status" value="1"/>
</dbReference>
<dbReference type="Pfam" id="PF00361">
    <property type="entry name" value="Proton_antipo_M"/>
    <property type="match status" value="1"/>
</dbReference>
<protein>
    <recommendedName>
        <fullName evidence="1">NADH-quinone oxidoreductase subunit N</fullName>
        <ecNumber evidence="1">7.1.1.-</ecNumber>
    </recommendedName>
    <alternativeName>
        <fullName evidence="1">NADH dehydrogenase I subunit N</fullName>
    </alternativeName>
    <alternativeName>
        <fullName evidence="1">NDH-1 subunit N</fullName>
    </alternativeName>
</protein>
<proteinExistence type="inferred from homology"/>
<evidence type="ECO:0000255" key="1">
    <source>
        <dbReference type="HAMAP-Rule" id="MF_00445"/>
    </source>
</evidence>
<name>NUON_SALDC</name>
<sequence length="485" mass="52043">MTITPQHLIALLPLLIVGLTVVVVMLSIAWRRNHFLNATLSVIGLNAALVSLWFVGQAGAMDVTPLMRVDGFAMLYTGLVLLASLATCTFAYPWLEGYNDNQEEFYLLVLIASLGGILLTNANHLAALFLGIELISLPLFGLIGYAFRQKRSLEASIKYTILSAAASSFLLFGMALVYAQSGNLSFEALGKSLGDGMLHEPLLLAGFGLMIVGLGFKLSLVPFHLWTPDVYQGAPAPVSTFLATASKIAIFGVVMRLFLYAPVGDSEAVRVVLGIIAFASIIFGNLMALSQTNIKRLLGYSSISHLGYLLVALIALQSGEMSMEAVGVYLAGYLFSSLGAFGVVSLMSSPFRGPDADSLYSYRGLFWHRPVLAAVMTVMMLSLAGIPMTLGFIGKFYVLAVGVQASLWWLVAAVVVGSAIGLYYYLRVAVSLYLHAPQQPGRDAPTNWQYSAGGIVVLISALLVLVLGVWPQPLISLVQLAMPLM</sequence>
<comment type="function">
    <text evidence="1">NDH-1 shuttles electrons from NADH, via FMN and iron-sulfur (Fe-S) centers, to quinones in the respiratory chain. The immediate electron acceptor for the enzyme in this species is believed to be ubiquinone. Couples the redox reaction to proton translocation (for every two electrons transferred, four hydrogen ions are translocated across the cytoplasmic membrane), and thus conserves the redox energy in a proton gradient.</text>
</comment>
<comment type="catalytic activity">
    <reaction evidence="1">
        <text>a quinone + NADH + 5 H(+)(in) = a quinol + NAD(+) + 4 H(+)(out)</text>
        <dbReference type="Rhea" id="RHEA:57888"/>
        <dbReference type="ChEBI" id="CHEBI:15378"/>
        <dbReference type="ChEBI" id="CHEBI:24646"/>
        <dbReference type="ChEBI" id="CHEBI:57540"/>
        <dbReference type="ChEBI" id="CHEBI:57945"/>
        <dbReference type="ChEBI" id="CHEBI:132124"/>
    </reaction>
</comment>
<comment type="subunit">
    <text evidence="1">NDH-1 is composed of 13 different subunits. Subunits NuoA, H, J, K, L, M, N constitute the membrane sector of the complex.</text>
</comment>
<comment type="subcellular location">
    <subcellularLocation>
        <location evidence="1">Cell inner membrane</location>
        <topology evidence="1">Multi-pass membrane protein</topology>
    </subcellularLocation>
</comment>
<comment type="similarity">
    <text evidence="1">Belongs to the complex I subunit 2 family.</text>
</comment>
<gene>
    <name evidence="1" type="primary">nuoN</name>
    <name type="ordered locus">SeD_A2662</name>
</gene>
<reference key="1">
    <citation type="journal article" date="2011" name="J. Bacteriol.">
        <title>Comparative genomics of 28 Salmonella enterica isolates: evidence for CRISPR-mediated adaptive sublineage evolution.</title>
        <authorList>
            <person name="Fricke W.F."/>
            <person name="Mammel M.K."/>
            <person name="McDermott P.F."/>
            <person name="Tartera C."/>
            <person name="White D.G."/>
            <person name="Leclerc J.E."/>
            <person name="Ravel J."/>
            <person name="Cebula T.A."/>
        </authorList>
    </citation>
    <scope>NUCLEOTIDE SEQUENCE [LARGE SCALE GENOMIC DNA]</scope>
    <source>
        <strain>CT_02021853</strain>
    </source>
</reference>
<accession>B5FPF7</accession>
<keyword id="KW-0997">Cell inner membrane</keyword>
<keyword id="KW-1003">Cell membrane</keyword>
<keyword id="KW-0472">Membrane</keyword>
<keyword id="KW-0520">NAD</keyword>
<keyword id="KW-0874">Quinone</keyword>
<keyword id="KW-1278">Translocase</keyword>
<keyword id="KW-0812">Transmembrane</keyword>
<keyword id="KW-1133">Transmembrane helix</keyword>
<keyword id="KW-0813">Transport</keyword>
<keyword id="KW-0830">Ubiquinone</keyword>
<feature type="chain" id="PRO_1000145874" description="NADH-quinone oxidoreductase subunit N">
    <location>
        <begin position="1"/>
        <end position="485"/>
    </location>
</feature>
<feature type="transmembrane region" description="Helical" evidence="1">
    <location>
        <begin position="8"/>
        <end position="28"/>
    </location>
</feature>
<feature type="transmembrane region" description="Helical" evidence="1">
    <location>
        <begin position="35"/>
        <end position="55"/>
    </location>
</feature>
<feature type="transmembrane region" description="Helical" evidence="1">
    <location>
        <begin position="71"/>
        <end position="91"/>
    </location>
</feature>
<feature type="transmembrane region" description="Helical" evidence="1">
    <location>
        <begin position="105"/>
        <end position="125"/>
    </location>
</feature>
<feature type="transmembrane region" description="Helical" evidence="1">
    <location>
        <begin position="127"/>
        <end position="147"/>
    </location>
</feature>
<feature type="transmembrane region" description="Helical" evidence="1">
    <location>
        <begin position="159"/>
        <end position="179"/>
    </location>
</feature>
<feature type="transmembrane region" description="Helical" evidence="1">
    <location>
        <begin position="203"/>
        <end position="223"/>
    </location>
</feature>
<feature type="transmembrane region" description="Helical" evidence="1">
    <location>
        <begin position="235"/>
        <end position="255"/>
    </location>
</feature>
<feature type="transmembrane region" description="Helical" evidence="1">
    <location>
        <begin position="271"/>
        <end position="291"/>
    </location>
</feature>
<feature type="transmembrane region" description="Helical" evidence="1">
    <location>
        <begin position="297"/>
        <end position="317"/>
    </location>
</feature>
<feature type="transmembrane region" description="Helical" evidence="1">
    <location>
        <begin position="326"/>
        <end position="346"/>
    </location>
</feature>
<feature type="transmembrane region" description="Helical" evidence="1">
    <location>
        <begin position="373"/>
        <end position="393"/>
    </location>
</feature>
<feature type="transmembrane region" description="Helical" evidence="1">
    <location>
        <begin position="408"/>
        <end position="430"/>
    </location>
</feature>
<feature type="transmembrane region" description="Helical" evidence="1">
    <location>
        <begin position="455"/>
        <end position="475"/>
    </location>
</feature>